<gene>
    <name type="ordered locus">MIMI_L763</name>
</gene>
<organism>
    <name type="scientific">Acanthamoeba polyphaga mimivirus</name>
    <name type="common">APMV</name>
    <dbReference type="NCBI Taxonomy" id="212035"/>
    <lineage>
        <taxon>Viruses</taxon>
        <taxon>Varidnaviria</taxon>
        <taxon>Bamfordvirae</taxon>
        <taxon>Nucleocytoviricota</taxon>
        <taxon>Megaviricetes</taxon>
        <taxon>Imitervirales</taxon>
        <taxon>Mimiviridae</taxon>
        <taxon>Megamimivirinae</taxon>
        <taxon>Mimivirus</taxon>
        <taxon>Mimivirus bradfordmassiliense</taxon>
    </lineage>
</organism>
<name>YL763_MIMIV</name>
<organismHost>
    <name type="scientific">Acanthamoeba polyphaga</name>
    <name type="common">Amoeba</name>
    <dbReference type="NCBI Taxonomy" id="5757"/>
</organismHost>
<sequence length="262" mass="31137">MDLITKFHLKNNLNRYNSFLEKAIKIHGNQYSYNKVYYITREDPVLILCNSCELSFLITPKKHLNKDTGQCPNCFPNKKQLRELQFIQQLLDIYGNQFDYSKISYQKSKHPVSIICAGCKFLIKKTPFELLRKKIHCPKCEPFKEYDSKSIVRCKITTQEFIKRAKERHGDRYDYSKTEYISMDDFVTIKCNNCSTEFNKKPKHHLKSVHKCCYIECKSIDKNQSPINSYRESILEKSKIITEKNTDNTQIESQEWLKWLNI</sequence>
<protein>
    <recommendedName>
        <fullName>Uncharacterized protein L763</fullName>
    </recommendedName>
</protein>
<feature type="chain" id="PRO_0000251129" description="Uncharacterized protein L763">
    <location>
        <begin position="1"/>
        <end position="262"/>
    </location>
</feature>
<reference key="1">
    <citation type="journal article" date="2004" name="Science">
        <title>The 1.2-megabase genome sequence of Mimivirus.</title>
        <authorList>
            <person name="Raoult D."/>
            <person name="Audic S."/>
            <person name="Robert C."/>
            <person name="Abergel C."/>
            <person name="Renesto P."/>
            <person name="Ogata H."/>
            <person name="La Scola B."/>
            <person name="Susan M."/>
            <person name="Claverie J.-M."/>
        </authorList>
    </citation>
    <scope>NUCLEOTIDE SEQUENCE [LARGE SCALE GENOMIC DNA]</scope>
    <source>
        <strain>Rowbotham-Bradford</strain>
    </source>
</reference>
<proteinExistence type="predicted"/>
<keyword id="KW-1185">Reference proteome</keyword>
<accession>Q5UPQ5</accession>
<dbReference type="EMBL" id="AY653733">
    <property type="protein sequence ID" value="AAV51023.1"/>
    <property type="molecule type" value="Genomic_DNA"/>
</dbReference>
<dbReference type="KEGG" id="vg:9925421"/>
<dbReference type="OrthoDB" id="5066at10239"/>
<dbReference type="Proteomes" id="UP000001134">
    <property type="component" value="Genome"/>
</dbReference>